<feature type="chain" id="PRO_1000094660" description="3-dehydroquinate synthase">
    <location>
        <begin position="1"/>
        <end position="362"/>
    </location>
</feature>
<feature type="binding site" evidence="1">
    <location>
        <begin position="71"/>
        <end position="76"/>
    </location>
    <ligand>
        <name>NAD(+)</name>
        <dbReference type="ChEBI" id="CHEBI:57540"/>
    </ligand>
</feature>
<feature type="binding site" evidence="1">
    <location>
        <begin position="105"/>
        <end position="109"/>
    </location>
    <ligand>
        <name>NAD(+)</name>
        <dbReference type="ChEBI" id="CHEBI:57540"/>
    </ligand>
</feature>
<feature type="binding site" evidence="1">
    <location>
        <begin position="129"/>
        <end position="130"/>
    </location>
    <ligand>
        <name>NAD(+)</name>
        <dbReference type="ChEBI" id="CHEBI:57540"/>
    </ligand>
</feature>
<feature type="binding site" evidence="1">
    <location>
        <position position="142"/>
    </location>
    <ligand>
        <name>NAD(+)</name>
        <dbReference type="ChEBI" id="CHEBI:57540"/>
    </ligand>
</feature>
<feature type="binding site" evidence="1">
    <location>
        <position position="151"/>
    </location>
    <ligand>
        <name>NAD(+)</name>
        <dbReference type="ChEBI" id="CHEBI:57540"/>
    </ligand>
</feature>
<feature type="binding site" evidence="1">
    <location>
        <begin position="169"/>
        <end position="172"/>
    </location>
    <ligand>
        <name>NAD(+)</name>
        <dbReference type="ChEBI" id="CHEBI:57540"/>
    </ligand>
</feature>
<feature type="binding site" evidence="1">
    <location>
        <position position="184"/>
    </location>
    <ligand>
        <name>Zn(2+)</name>
        <dbReference type="ChEBI" id="CHEBI:29105"/>
    </ligand>
</feature>
<feature type="binding site" evidence="1">
    <location>
        <position position="248"/>
    </location>
    <ligand>
        <name>Zn(2+)</name>
        <dbReference type="ChEBI" id="CHEBI:29105"/>
    </ligand>
</feature>
<feature type="binding site" evidence="1">
    <location>
        <position position="265"/>
    </location>
    <ligand>
        <name>Zn(2+)</name>
        <dbReference type="ChEBI" id="CHEBI:29105"/>
    </ligand>
</feature>
<proteinExistence type="inferred from homology"/>
<dbReference type="EC" id="4.2.3.4" evidence="1"/>
<dbReference type="EMBL" id="CP001048">
    <property type="protein sequence ID" value="ACC90893.1"/>
    <property type="molecule type" value="Genomic_DNA"/>
</dbReference>
<dbReference type="RefSeq" id="WP_002208898.1">
    <property type="nucleotide sequence ID" value="NZ_CP009780.1"/>
</dbReference>
<dbReference type="SMR" id="B2K5T4"/>
<dbReference type="GeneID" id="57974449"/>
<dbReference type="KEGG" id="ypb:YPTS_3944"/>
<dbReference type="PATRIC" id="fig|502801.10.peg.3408"/>
<dbReference type="UniPathway" id="UPA00053">
    <property type="reaction ID" value="UER00085"/>
</dbReference>
<dbReference type="GO" id="GO:0005737">
    <property type="term" value="C:cytoplasm"/>
    <property type="evidence" value="ECO:0007669"/>
    <property type="project" value="UniProtKB-SubCell"/>
</dbReference>
<dbReference type="GO" id="GO:0003856">
    <property type="term" value="F:3-dehydroquinate synthase activity"/>
    <property type="evidence" value="ECO:0007669"/>
    <property type="project" value="UniProtKB-UniRule"/>
</dbReference>
<dbReference type="GO" id="GO:0046872">
    <property type="term" value="F:metal ion binding"/>
    <property type="evidence" value="ECO:0007669"/>
    <property type="project" value="UniProtKB-KW"/>
</dbReference>
<dbReference type="GO" id="GO:0000166">
    <property type="term" value="F:nucleotide binding"/>
    <property type="evidence" value="ECO:0007669"/>
    <property type="project" value="UniProtKB-KW"/>
</dbReference>
<dbReference type="GO" id="GO:0008652">
    <property type="term" value="P:amino acid biosynthetic process"/>
    <property type="evidence" value="ECO:0007669"/>
    <property type="project" value="UniProtKB-KW"/>
</dbReference>
<dbReference type="GO" id="GO:0009073">
    <property type="term" value="P:aromatic amino acid family biosynthetic process"/>
    <property type="evidence" value="ECO:0007669"/>
    <property type="project" value="UniProtKB-KW"/>
</dbReference>
<dbReference type="GO" id="GO:0009423">
    <property type="term" value="P:chorismate biosynthetic process"/>
    <property type="evidence" value="ECO:0007669"/>
    <property type="project" value="UniProtKB-UniRule"/>
</dbReference>
<dbReference type="CDD" id="cd08195">
    <property type="entry name" value="DHQS"/>
    <property type="match status" value="1"/>
</dbReference>
<dbReference type="FunFam" id="1.20.1090.10:FF:000002">
    <property type="entry name" value="3-dehydroquinate synthase"/>
    <property type="match status" value="1"/>
</dbReference>
<dbReference type="FunFam" id="3.40.50.1970:FF:000001">
    <property type="entry name" value="3-dehydroquinate synthase"/>
    <property type="match status" value="1"/>
</dbReference>
<dbReference type="Gene3D" id="3.40.50.1970">
    <property type="match status" value="1"/>
</dbReference>
<dbReference type="Gene3D" id="1.20.1090.10">
    <property type="entry name" value="Dehydroquinate synthase-like - alpha domain"/>
    <property type="match status" value="1"/>
</dbReference>
<dbReference type="HAMAP" id="MF_00110">
    <property type="entry name" value="DHQ_synthase"/>
    <property type="match status" value="1"/>
</dbReference>
<dbReference type="InterPro" id="IPR050071">
    <property type="entry name" value="Dehydroquinate_synthase"/>
</dbReference>
<dbReference type="InterPro" id="IPR016037">
    <property type="entry name" value="DHQ_synth_AroB"/>
</dbReference>
<dbReference type="InterPro" id="IPR030963">
    <property type="entry name" value="DHQ_synth_fam"/>
</dbReference>
<dbReference type="InterPro" id="IPR030960">
    <property type="entry name" value="DHQS/DOIS_N"/>
</dbReference>
<dbReference type="InterPro" id="IPR056179">
    <property type="entry name" value="DHQS_C"/>
</dbReference>
<dbReference type="NCBIfam" id="TIGR01357">
    <property type="entry name" value="aroB"/>
    <property type="match status" value="1"/>
</dbReference>
<dbReference type="PANTHER" id="PTHR43622">
    <property type="entry name" value="3-DEHYDROQUINATE SYNTHASE"/>
    <property type="match status" value="1"/>
</dbReference>
<dbReference type="PANTHER" id="PTHR43622:SF7">
    <property type="entry name" value="3-DEHYDROQUINATE SYNTHASE, CHLOROPLASTIC"/>
    <property type="match status" value="1"/>
</dbReference>
<dbReference type="Pfam" id="PF01761">
    <property type="entry name" value="DHQ_synthase"/>
    <property type="match status" value="1"/>
</dbReference>
<dbReference type="Pfam" id="PF24621">
    <property type="entry name" value="DHQS_C"/>
    <property type="match status" value="1"/>
</dbReference>
<dbReference type="PIRSF" id="PIRSF001455">
    <property type="entry name" value="DHQ_synth"/>
    <property type="match status" value="1"/>
</dbReference>
<dbReference type="SUPFAM" id="SSF56796">
    <property type="entry name" value="Dehydroquinate synthase-like"/>
    <property type="match status" value="1"/>
</dbReference>
<keyword id="KW-0028">Amino-acid biosynthesis</keyword>
<keyword id="KW-0057">Aromatic amino acid biosynthesis</keyword>
<keyword id="KW-0170">Cobalt</keyword>
<keyword id="KW-0963">Cytoplasm</keyword>
<keyword id="KW-0456">Lyase</keyword>
<keyword id="KW-0479">Metal-binding</keyword>
<keyword id="KW-0520">NAD</keyword>
<keyword id="KW-0547">Nucleotide-binding</keyword>
<keyword id="KW-0862">Zinc</keyword>
<gene>
    <name evidence="1" type="primary">aroB</name>
    <name type="ordered locus">YPTS_3944</name>
</gene>
<reference key="1">
    <citation type="submission" date="2008-04" db="EMBL/GenBank/DDBJ databases">
        <title>Complete sequence of Yersinia pseudotuberculosis PB1/+.</title>
        <authorList>
            <person name="Copeland A."/>
            <person name="Lucas S."/>
            <person name="Lapidus A."/>
            <person name="Glavina del Rio T."/>
            <person name="Dalin E."/>
            <person name="Tice H."/>
            <person name="Bruce D."/>
            <person name="Goodwin L."/>
            <person name="Pitluck S."/>
            <person name="Munk A.C."/>
            <person name="Brettin T."/>
            <person name="Detter J.C."/>
            <person name="Han C."/>
            <person name="Tapia R."/>
            <person name="Schmutz J."/>
            <person name="Larimer F."/>
            <person name="Land M."/>
            <person name="Hauser L."/>
            <person name="Challacombe J.F."/>
            <person name="Green L."/>
            <person name="Lindler L.E."/>
            <person name="Nikolich M.P."/>
            <person name="Richardson P."/>
        </authorList>
    </citation>
    <scope>NUCLEOTIDE SEQUENCE [LARGE SCALE GENOMIC DNA]</scope>
    <source>
        <strain>PB1/+</strain>
    </source>
</reference>
<protein>
    <recommendedName>
        <fullName evidence="1">3-dehydroquinate synthase</fullName>
        <shortName evidence="1">DHQS</shortName>
        <ecNumber evidence="1">4.2.3.4</ecNumber>
    </recommendedName>
</protein>
<name>AROB_YERPB</name>
<sequence>MEKITVTLGERSYPITIAAGLFNDPASFKPLKAGDQVMLVTNQTLAPLYLDSLRAVLEHGGIKVDQVILPDGEQYKSLSVMEQVFSALLEKPHGRDTTLVALGGGVVGDLTGFAAACYQRGVRFIQVPTTLLSQVDSSVGGKTAVNHPLGKNMIGAFYQPASVVVDLNCLKTLPPRELASGLAEVIKYGIILDAAFFDWLENNIDALLALDMSALAYCIRRCCELKADVVAADEREESGARALLNLGHTYGHAIEAEMGYGVWLHGEAVAAGMVMAAQTSRRLGQLSVSDVERIKKLLLRAGLPVCGPKEMAPESYLPHMMRDKKVLAGELRLVLPTAIGKSEIRGGVAHDMVLASIADCRP</sequence>
<accession>B2K5T4</accession>
<organism>
    <name type="scientific">Yersinia pseudotuberculosis serotype IB (strain PB1/+)</name>
    <dbReference type="NCBI Taxonomy" id="502801"/>
    <lineage>
        <taxon>Bacteria</taxon>
        <taxon>Pseudomonadati</taxon>
        <taxon>Pseudomonadota</taxon>
        <taxon>Gammaproteobacteria</taxon>
        <taxon>Enterobacterales</taxon>
        <taxon>Yersiniaceae</taxon>
        <taxon>Yersinia</taxon>
    </lineage>
</organism>
<comment type="function">
    <text evidence="1">Catalyzes the conversion of 3-deoxy-D-arabino-heptulosonate 7-phosphate (DAHP) to dehydroquinate (DHQ).</text>
</comment>
<comment type="catalytic activity">
    <reaction evidence="1">
        <text>7-phospho-2-dehydro-3-deoxy-D-arabino-heptonate = 3-dehydroquinate + phosphate</text>
        <dbReference type="Rhea" id="RHEA:21968"/>
        <dbReference type="ChEBI" id="CHEBI:32364"/>
        <dbReference type="ChEBI" id="CHEBI:43474"/>
        <dbReference type="ChEBI" id="CHEBI:58394"/>
        <dbReference type="EC" id="4.2.3.4"/>
    </reaction>
</comment>
<comment type="cofactor">
    <cofactor evidence="1">
        <name>Co(2+)</name>
        <dbReference type="ChEBI" id="CHEBI:48828"/>
    </cofactor>
    <cofactor evidence="1">
        <name>Zn(2+)</name>
        <dbReference type="ChEBI" id="CHEBI:29105"/>
    </cofactor>
    <text evidence="1">Binds 1 divalent metal cation per subunit. Can use either Co(2+) or Zn(2+).</text>
</comment>
<comment type="cofactor">
    <cofactor evidence="1">
        <name>NAD(+)</name>
        <dbReference type="ChEBI" id="CHEBI:57540"/>
    </cofactor>
</comment>
<comment type="pathway">
    <text evidence="1">Metabolic intermediate biosynthesis; chorismate biosynthesis; chorismate from D-erythrose 4-phosphate and phosphoenolpyruvate: step 2/7.</text>
</comment>
<comment type="subcellular location">
    <subcellularLocation>
        <location evidence="1">Cytoplasm</location>
    </subcellularLocation>
</comment>
<comment type="similarity">
    <text evidence="1">Belongs to the sugar phosphate cyclases superfamily. Dehydroquinate synthase family.</text>
</comment>
<evidence type="ECO:0000255" key="1">
    <source>
        <dbReference type="HAMAP-Rule" id="MF_00110"/>
    </source>
</evidence>